<gene>
    <name evidence="1" type="primary">rplB</name>
    <name type="ordered locus">Pden_0762</name>
</gene>
<organism>
    <name type="scientific">Paracoccus denitrificans (strain Pd 1222)</name>
    <dbReference type="NCBI Taxonomy" id="318586"/>
    <lineage>
        <taxon>Bacteria</taxon>
        <taxon>Pseudomonadati</taxon>
        <taxon>Pseudomonadota</taxon>
        <taxon>Alphaproteobacteria</taxon>
        <taxon>Rhodobacterales</taxon>
        <taxon>Paracoccaceae</taxon>
        <taxon>Paracoccus</taxon>
    </lineage>
</organism>
<protein>
    <recommendedName>
        <fullName evidence="1">Large ribosomal subunit protein uL2</fullName>
    </recommendedName>
    <alternativeName>
        <fullName evidence="3">50S ribosomal protein L2</fullName>
    </alternativeName>
</protein>
<sequence>MALKSYKPTTPGQRGLVLIDRSELWKGRPVKSLTEGLTKNGGRNNTGRITMRRKGGGAKRLYRIVDFKRTKFDVSATVERIEYDPNRTAFIALIKYEDGEQAYILAPQRLAVGDKVIAGAKVDVKPGNAMPFSGMPIGTIVHNVELKPGKGGQIARSAGTYAQFVGRDGGYAQIRLSSGELRLVRQECMATIGAVSNSDHSNQNFGKAGRNRHKGIRPSVRGVAMNPIDHPHGGGEGRTSGGRHPVTPWGKGTKGTRTRSNKSTDKYILRSRHAKKKGR</sequence>
<accession>A1B030</accession>
<proteinExistence type="inferred from homology"/>
<name>RL2_PARDP</name>
<dbReference type="EMBL" id="CP000489">
    <property type="protein sequence ID" value="ABL68874.1"/>
    <property type="molecule type" value="Genomic_DNA"/>
</dbReference>
<dbReference type="RefSeq" id="WP_011747104.1">
    <property type="nucleotide sequence ID" value="NC_008686.1"/>
</dbReference>
<dbReference type="SMR" id="A1B030"/>
<dbReference type="STRING" id="318586.Pden_0762"/>
<dbReference type="EnsemblBacteria" id="ABL68874">
    <property type="protein sequence ID" value="ABL68874"/>
    <property type="gene ID" value="Pden_0762"/>
</dbReference>
<dbReference type="GeneID" id="93451986"/>
<dbReference type="KEGG" id="pde:Pden_0762"/>
<dbReference type="eggNOG" id="COG0090">
    <property type="taxonomic scope" value="Bacteria"/>
</dbReference>
<dbReference type="HOGENOM" id="CLU_036235_2_1_5"/>
<dbReference type="OrthoDB" id="9778722at2"/>
<dbReference type="Proteomes" id="UP000000361">
    <property type="component" value="Chromosome 1"/>
</dbReference>
<dbReference type="GO" id="GO:0015934">
    <property type="term" value="C:large ribosomal subunit"/>
    <property type="evidence" value="ECO:0007669"/>
    <property type="project" value="InterPro"/>
</dbReference>
<dbReference type="GO" id="GO:0019843">
    <property type="term" value="F:rRNA binding"/>
    <property type="evidence" value="ECO:0007669"/>
    <property type="project" value="UniProtKB-UniRule"/>
</dbReference>
<dbReference type="GO" id="GO:0003735">
    <property type="term" value="F:structural constituent of ribosome"/>
    <property type="evidence" value="ECO:0007669"/>
    <property type="project" value="InterPro"/>
</dbReference>
<dbReference type="GO" id="GO:0016740">
    <property type="term" value="F:transferase activity"/>
    <property type="evidence" value="ECO:0007669"/>
    <property type="project" value="InterPro"/>
</dbReference>
<dbReference type="GO" id="GO:0002181">
    <property type="term" value="P:cytoplasmic translation"/>
    <property type="evidence" value="ECO:0007669"/>
    <property type="project" value="TreeGrafter"/>
</dbReference>
<dbReference type="FunFam" id="2.30.30.30:FF:000001">
    <property type="entry name" value="50S ribosomal protein L2"/>
    <property type="match status" value="1"/>
</dbReference>
<dbReference type="FunFam" id="2.40.50.140:FF:000003">
    <property type="entry name" value="50S ribosomal protein L2"/>
    <property type="match status" value="1"/>
</dbReference>
<dbReference type="FunFam" id="4.10.950.10:FF:000001">
    <property type="entry name" value="50S ribosomal protein L2"/>
    <property type="match status" value="1"/>
</dbReference>
<dbReference type="Gene3D" id="2.30.30.30">
    <property type="match status" value="1"/>
</dbReference>
<dbReference type="Gene3D" id="2.40.50.140">
    <property type="entry name" value="Nucleic acid-binding proteins"/>
    <property type="match status" value="1"/>
</dbReference>
<dbReference type="Gene3D" id="4.10.950.10">
    <property type="entry name" value="Ribosomal protein L2, domain 3"/>
    <property type="match status" value="1"/>
</dbReference>
<dbReference type="HAMAP" id="MF_01320_B">
    <property type="entry name" value="Ribosomal_uL2_B"/>
    <property type="match status" value="1"/>
</dbReference>
<dbReference type="InterPro" id="IPR012340">
    <property type="entry name" value="NA-bd_OB-fold"/>
</dbReference>
<dbReference type="InterPro" id="IPR014722">
    <property type="entry name" value="Rib_uL2_dom2"/>
</dbReference>
<dbReference type="InterPro" id="IPR002171">
    <property type="entry name" value="Ribosomal_uL2"/>
</dbReference>
<dbReference type="InterPro" id="IPR005880">
    <property type="entry name" value="Ribosomal_uL2_bac/org-type"/>
</dbReference>
<dbReference type="InterPro" id="IPR022669">
    <property type="entry name" value="Ribosomal_uL2_C"/>
</dbReference>
<dbReference type="InterPro" id="IPR022671">
    <property type="entry name" value="Ribosomal_uL2_CS"/>
</dbReference>
<dbReference type="InterPro" id="IPR014726">
    <property type="entry name" value="Ribosomal_uL2_dom3"/>
</dbReference>
<dbReference type="InterPro" id="IPR022666">
    <property type="entry name" value="Ribosomal_uL2_RNA-bd_dom"/>
</dbReference>
<dbReference type="InterPro" id="IPR008991">
    <property type="entry name" value="Translation_prot_SH3-like_sf"/>
</dbReference>
<dbReference type="NCBIfam" id="TIGR01171">
    <property type="entry name" value="rplB_bact"/>
    <property type="match status" value="1"/>
</dbReference>
<dbReference type="PANTHER" id="PTHR13691:SF5">
    <property type="entry name" value="LARGE RIBOSOMAL SUBUNIT PROTEIN UL2M"/>
    <property type="match status" value="1"/>
</dbReference>
<dbReference type="PANTHER" id="PTHR13691">
    <property type="entry name" value="RIBOSOMAL PROTEIN L2"/>
    <property type="match status" value="1"/>
</dbReference>
<dbReference type="Pfam" id="PF00181">
    <property type="entry name" value="Ribosomal_L2"/>
    <property type="match status" value="1"/>
</dbReference>
<dbReference type="Pfam" id="PF03947">
    <property type="entry name" value="Ribosomal_L2_C"/>
    <property type="match status" value="1"/>
</dbReference>
<dbReference type="PIRSF" id="PIRSF002158">
    <property type="entry name" value="Ribosomal_L2"/>
    <property type="match status" value="1"/>
</dbReference>
<dbReference type="SMART" id="SM01383">
    <property type="entry name" value="Ribosomal_L2"/>
    <property type="match status" value="1"/>
</dbReference>
<dbReference type="SMART" id="SM01382">
    <property type="entry name" value="Ribosomal_L2_C"/>
    <property type="match status" value="1"/>
</dbReference>
<dbReference type="SUPFAM" id="SSF50249">
    <property type="entry name" value="Nucleic acid-binding proteins"/>
    <property type="match status" value="1"/>
</dbReference>
<dbReference type="SUPFAM" id="SSF50104">
    <property type="entry name" value="Translation proteins SH3-like domain"/>
    <property type="match status" value="1"/>
</dbReference>
<dbReference type="PROSITE" id="PS00467">
    <property type="entry name" value="RIBOSOMAL_L2"/>
    <property type="match status" value="1"/>
</dbReference>
<keyword id="KW-1185">Reference proteome</keyword>
<keyword id="KW-0687">Ribonucleoprotein</keyword>
<keyword id="KW-0689">Ribosomal protein</keyword>
<keyword id="KW-0694">RNA-binding</keyword>
<keyword id="KW-0699">rRNA-binding</keyword>
<reference key="1">
    <citation type="submission" date="2006-12" db="EMBL/GenBank/DDBJ databases">
        <title>Complete sequence of chromosome 1 of Paracoccus denitrificans PD1222.</title>
        <authorList>
            <person name="Copeland A."/>
            <person name="Lucas S."/>
            <person name="Lapidus A."/>
            <person name="Barry K."/>
            <person name="Detter J.C."/>
            <person name="Glavina del Rio T."/>
            <person name="Hammon N."/>
            <person name="Israni S."/>
            <person name="Dalin E."/>
            <person name="Tice H."/>
            <person name="Pitluck S."/>
            <person name="Munk A.C."/>
            <person name="Brettin T."/>
            <person name="Bruce D."/>
            <person name="Han C."/>
            <person name="Tapia R."/>
            <person name="Gilna P."/>
            <person name="Schmutz J."/>
            <person name="Larimer F."/>
            <person name="Land M."/>
            <person name="Hauser L."/>
            <person name="Kyrpides N."/>
            <person name="Lykidis A."/>
            <person name="Spiro S."/>
            <person name="Richardson D.J."/>
            <person name="Moir J.W.B."/>
            <person name="Ferguson S.J."/>
            <person name="van Spanning R.J.M."/>
            <person name="Richardson P."/>
        </authorList>
    </citation>
    <scope>NUCLEOTIDE SEQUENCE [LARGE SCALE GENOMIC DNA]</scope>
    <source>
        <strain>Pd 1222</strain>
    </source>
</reference>
<evidence type="ECO:0000255" key="1">
    <source>
        <dbReference type="HAMAP-Rule" id="MF_01320"/>
    </source>
</evidence>
<evidence type="ECO:0000256" key="2">
    <source>
        <dbReference type="SAM" id="MobiDB-lite"/>
    </source>
</evidence>
<evidence type="ECO:0000305" key="3"/>
<feature type="chain" id="PRO_0000309975" description="Large ribosomal subunit protein uL2">
    <location>
        <begin position="1"/>
        <end position="279"/>
    </location>
</feature>
<feature type="region of interest" description="Disordered" evidence="2">
    <location>
        <begin position="223"/>
        <end position="279"/>
    </location>
</feature>
<feature type="compositionally biased region" description="Basic residues" evidence="2">
    <location>
        <begin position="269"/>
        <end position="279"/>
    </location>
</feature>
<comment type="function">
    <text evidence="1">One of the primary rRNA binding proteins. Required for association of the 30S and 50S subunits to form the 70S ribosome, for tRNA binding and peptide bond formation. It has been suggested to have peptidyltransferase activity; this is somewhat controversial. Makes several contacts with the 16S rRNA in the 70S ribosome.</text>
</comment>
<comment type="subunit">
    <text evidence="1">Part of the 50S ribosomal subunit. Forms a bridge to the 30S subunit in the 70S ribosome.</text>
</comment>
<comment type="similarity">
    <text evidence="1">Belongs to the universal ribosomal protein uL2 family.</text>
</comment>